<dbReference type="EMBL" id="M76485">
    <property type="protein sequence ID" value="AAA42924.1"/>
    <property type="molecule type" value="Genomic_RNA"/>
</dbReference>
<dbReference type="EMBL" id="U16304">
    <property type="protein sequence ID" value="AAC59630.1"/>
    <property type="molecule type" value="Genomic_RNA"/>
</dbReference>
<dbReference type="RefSeq" id="NP_042867.1">
    <property type="nucleotide sequence ID" value="NC_001661.1"/>
</dbReference>
<dbReference type="ABCD" id="Q00686">
    <property type="antibodies" value="2 sequenced antibodies"/>
</dbReference>
<dbReference type="GeneID" id="1493988"/>
<dbReference type="KEGG" id="vg:1493988"/>
<dbReference type="Proteomes" id="UP000204414">
    <property type="component" value="Segment"/>
</dbReference>
<dbReference type="GO" id="GO:0019029">
    <property type="term" value="C:helical viral capsid"/>
    <property type="evidence" value="ECO:0007669"/>
    <property type="project" value="UniProtKB-KW"/>
</dbReference>
<dbReference type="InterPro" id="IPR002679">
    <property type="entry name" value="Closter_coat"/>
</dbReference>
<dbReference type="Pfam" id="PF01785">
    <property type="entry name" value="Closter_coat"/>
    <property type="match status" value="1"/>
</dbReference>
<feature type="chain" id="PRO_0000222537" description="Capsid protein">
    <location>
        <begin position="1"/>
        <end position="223"/>
    </location>
</feature>
<feature type="region of interest" description="Disordered" evidence="1">
    <location>
        <begin position="1"/>
        <end position="21"/>
    </location>
</feature>
<feature type="compositionally biased region" description="Basic and acidic residues" evidence="1">
    <location>
        <begin position="1"/>
        <end position="19"/>
    </location>
</feature>
<evidence type="ECO:0000256" key="1">
    <source>
        <dbReference type="SAM" id="MobiDB-lite"/>
    </source>
</evidence>
<evidence type="ECO:0000305" key="2"/>
<sequence>MDDETKKLKNKNKETKEGDDVVAAESSFSSVNLHIDPTLITMNDVRQLSTQQNAALNRDLFLTLKGKHPNLPDKDKDFRIAMMLYRLAVKSSSLQSDDDATGITYTREGVEVDLSDKLWTDVVFNSKGIGNRTNALRVWGRTNDALYLAFCRQNRNLSYGGRPLDAGIPAGYHYLCADFLTGAGLTDLECAVYIQAKEQLLKKRGADDVVVTNVRQLGKFNTR</sequence>
<name>CAPSD_CTV36</name>
<comment type="subcellular location">
    <subcellularLocation>
        <location evidence="2">Virion</location>
    </subcellularLocation>
</comment>
<comment type="PTM">
    <text>Consists of at least two size variants, CP1 and CP2, which result of post-translational proteolysis at sites approximately 12 to 15 and 26 AA from the N-terminus respectively.</text>
</comment>
<comment type="similarity">
    <text evidence="2">Belongs to the closteroviridae capsid protein family.</text>
</comment>
<reference key="1">
    <citation type="journal article" date="1991" name="J. Gen. Virol.">
        <title>Molecular cloning and nucleotide sequencing of the coat protein gene of citrus tristeza virus.</title>
        <authorList>
            <person name="Sekiya M.E."/>
            <person name="Lawrence S.D."/>
            <person name="McCaffery M."/>
            <person name="Cline K."/>
        </authorList>
    </citation>
    <scope>NUCLEOTIDE SEQUENCE [GENOMIC RNA]</scope>
    <scope>PROTEIN SEQUENCE OF 27-38</scope>
</reference>
<reference key="2">
    <citation type="journal article" date="1994" name="Virology">
        <title>Nucleotide sequence and organization of eight 3' open reading frames of the citrus tristeza closterovirus genome.</title>
        <authorList>
            <person name="Pappu H.R."/>
            <person name="Karasev A.V."/>
            <person name="Anderson E.J."/>
            <person name="Pappu S.S."/>
            <person name="Hilf M.E."/>
            <person name="Febres V."/>
            <person name="Eckloff R.M.G."/>
            <person name="McCaffery M."/>
            <person name="Boyko V."/>
            <person name="Gowda S."/>
            <person name="Dolja V.V."/>
            <person name="Koonin E.V."/>
        </authorList>
    </citation>
    <scope>NUCLEOTIDE SEQUENCE [GENOMIC RNA]</scope>
</reference>
<proteinExistence type="evidence at protein level"/>
<accession>Q00686</accession>
<protein>
    <recommendedName>
        <fullName>Capsid protein</fullName>
        <shortName>CP</shortName>
    </recommendedName>
    <alternativeName>
        <fullName>Coat protein</fullName>
    </alternativeName>
</protein>
<organism>
    <name type="scientific">Citrus tristeza virus (isolate T36)</name>
    <name type="common">CTV</name>
    <dbReference type="NCBI Taxonomy" id="31712"/>
    <lineage>
        <taxon>Viruses</taxon>
        <taxon>Riboviria</taxon>
        <taxon>Orthornavirae</taxon>
        <taxon>Kitrinoviricota</taxon>
        <taxon>Alsuviricetes</taxon>
        <taxon>Martellivirales</taxon>
        <taxon>Closteroviridae</taxon>
        <taxon>Closterovirus</taxon>
        <taxon>Citrus tristeza virus</taxon>
    </lineage>
</organism>
<keyword id="KW-0167">Capsid protein</keyword>
<keyword id="KW-0903">Direct protein sequencing</keyword>
<keyword id="KW-1139">Helical capsid protein</keyword>
<keyword id="KW-1185">Reference proteome</keyword>
<keyword id="KW-0946">Virion</keyword>
<organismHost>
    <name type="scientific">Afraegle paniculata</name>
    <dbReference type="NCBI Taxonomy" id="231460"/>
</organismHost>
<organismHost>
    <name type="scientific">Citrus aurantiifolia</name>
    <name type="common">Key lime</name>
    <name type="synonym">Limonia aurantifolia</name>
    <dbReference type="NCBI Taxonomy" id="159033"/>
</organismHost>
<organismHost>
    <name type="scientific">Citrus paradisi</name>
    <name type="common">Grapefruit</name>
    <dbReference type="NCBI Taxonomy" id="37656"/>
</organismHost>
<organismHost>
    <name type="scientific">Citrus reticulata</name>
    <name type="common">Tangerine</name>
    <dbReference type="NCBI Taxonomy" id="85571"/>
</organismHost>
<organismHost>
    <name type="scientific">Pamburus missionis</name>
    <dbReference type="NCBI Taxonomy" id="159062"/>
</organismHost>
<organismHost>
    <name type="scientific">Passiflora</name>
    <name type="common">passionflowers</name>
    <dbReference type="NCBI Taxonomy" id="3684"/>
</organismHost>